<dbReference type="EMBL" id="EU164975">
    <property type="protein sequence ID" value="ABV56207.1"/>
    <property type="molecule type" value="mRNA"/>
</dbReference>
<dbReference type="EMBL" id="EU149766">
    <property type="protein sequence ID" value="ABV56569.1"/>
    <property type="molecule type" value="mRNA"/>
</dbReference>
<dbReference type="PDB" id="2LN8">
    <property type="method" value="NMR"/>
    <property type="chains" value="A=1-75"/>
</dbReference>
<dbReference type="PDBsum" id="2LN8"/>
<dbReference type="BMRB" id="A8I0L8"/>
<dbReference type="SMR" id="A8I0L8"/>
<dbReference type="EvolutionaryTrace" id="A8I0L8"/>
<dbReference type="GO" id="GO:0005576">
    <property type="term" value="C:extracellular region"/>
    <property type="evidence" value="ECO:0007669"/>
    <property type="project" value="UniProtKB-SubCell"/>
</dbReference>
<dbReference type="GO" id="GO:0006952">
    <property type="term" value="P:defense response"/>
    <property type="evidence" value="ECO:0007669"/>
    <property type="project" value="InterPro"/>
</dbReference>
<dbReference type="Gene3D" id="3.30.30.100">
    <property type="match status" value="1"/>
</dbReference>
<dbReference type="InterPro" id="IPR029230">
    <property type="entry name" value="Macin"/>
</dbReference>
<dbReference type="InterPro" id="IPR038456">
    <property type="entry name" value="Macin_sf"/>
</dbReference>
<dbReference type="Pfam" id="PF14865">
    <property type="entry name" value="Macin"/>
    <property type="match status" value="1"/>
</dbReference>
<name>THMAC_HIRME</name>
<accession>A8I0L8</accession>
<accession>A8IK85</accession>
<feature type="chain" id="PRO_0000342178" description="Theromacin">
    <location>
        <begin position="1"/>
        <end position="75"/>
    </location>
</feature>
<feature type="disulfide bond" evidence="1">
    <location>
        <begin position="2"/>
        <end position="9"/>
    </location>
</feature>
<feature type="disulfide bond" evidence="1">
    <location>
        <begin position="24"/>
        <end position="28"/>
    </location>
</feature>
<feature type="disulfide bond" evidence="1">
    <location>
        <begin position="31"/>
        <end position="73"/>
    </location>
</feature>
<feature type="disulfide bond" evidence="1">
    <location>
        <begin position="39"/>
        <end position="47"/>
    </location>
</feature>
<feature type="disulfide bond" evidence="1">
    <location>
        <begin position="57"/>
        <end position="59"/>
    </location>
</feature>
<feature type="helix" evidence="3">
    <location>
        <begin position="3"/>
        <end position="6"/>
    </location>
</feature>
<feature type="turn" evidence="3">
    <location>
        <begin position="18"/>
        <end position="21"/>
    </location>
</feature>
<feature type="helix" evidence="3">
    <location>
        <begin position="25"/>
        <end position="30"/>
    </location>
</feature>
<feature type="strand" evidence="3">
    <location>
        <begin position="35"/>
        <end position="39"/>
    </location>
</feature>
<feature type="strand" evidence="3">
    <location>
        <begin position="57"/>
        <end position="60"/>
    </location>
</feature>
<feature type="helix" evidence="3">
    <location>
        <begin position="71"/>
        <end position="73"/>
    </location>
</feature>
<proteinExistence type="evidence at protein level"/>
<organism>
    <name type="scientific">Hirudo medicinalis</name>
    <name type="common">Medicinal leech</name>
    <dbReference type="NCBI Taxonomy" id="6421"/>
    <lineage>
        <taxon>Eukaryota</taxon>
        <taxon>Metazoa</taxon>
        <taxon>Spiralia</taxon>
        <taxon>Lophotrochozoa</taxon>
        <taxon>Annelida</taxon>
        <taxon>Clitellata</taxon>
        <taxon>Hirudinea</taxon>
        <taxon>Hirudinida</taxon>
        <taxon>Hirudiniformes</taxon>
        <taxon>Hirudinidae</taxon>
        <taxon>Hirudo</taxon>
    </lineage>
</organism>
<sequence length="75" mass="8453">GCFEDWSRCSPSTASATGVLWRSCDSYCKVCFKADRGECYDSPSLNCPHRLPNNKQCRCINARTAKDNRNPTCWA</sequence>
<evidence type="ECO:0000250" key="1"/>
<evidence type="ECO:0000305" key="2"/>
<evidence type="ECO:0007829" key="3">
    <source>
        <dbReference type="PDB" id="2LN8"/>
    </source>
</evidence>
<reference key="1">
    <citation type="submission" date="2007-09" db="EMBL/GenBank/DDBJ databases">
        <title>Antimicrobial peptides isolated from the medicinal leech.</title>
        <authorList>
            <person name="Schikorski D."/>
            <person name="Salzet M."/>
            <person name="Tasiemski A."/>
        </authorList>
    </citation>
    <scope>NUCLEOTIDE SEQUENCE [MRNA]</scope>
</reference>
<comment type="function">
    <text evidence="1">Has a bactericial activity.</text>
</comment>
<comment type="subcellular location">
    <subcellularLocation>
        <location evidence="1">Secreted</location>
    </subcellularLocation>
</comment>
<comment type="similarity">
    <text evidence="2">Belongs to the macin family.</text>
</comment>
<protein>
    <recommendedName>
        <fullName>Theromacin</fullName>
    </recommendedName>
</protein>
<keyword id="KW-0002">3D-structure</keyword>
<keyword id="KW-0929">Antimicrobial</keyword>
<keyword id="KW-1015">Disulfide bond</keyword>
<keyword id="KW-0964">Secreted</keyword>